<name>MDTH_ECOL5</name>
<protein>
    <recommendedName>
        <fullName evidence="1">Multidrug resistance protein MdtH</fullName>
    </recommendedName>
</protein>
<evidence type="ECO:0000255" key="1">
    <source>
        <dbReference type="HAMAP-Rule" id="MF_01529"/>
    </source>
</evidence>
<accession>Q0TJ09</accession>
<sequence length="402" mass="44363">MSRVSQARNLGKYFLLIDNMLVVLGFFVVFPLISIRFVDQMGWAAVMVGIALGLRQFIQQGLGIFGGAIADRFGAKPMIVTGMLMRAAGFATMGIAHEPWLLWFSCLLSGLGGTLFDPPRSALVVKLIRPQQRGRFFSLLMMQDSAGAVIGALLGSWLLQYDFRLVCATGAVLFVLCAAFNAWLLPAWKLSTVRTPVREGMTRVMRDKRFVTYVLTLAGYYMLAVQVMLMLPIMVNDVAGAPSAVKWMYAIEACLSLTLLYPIARWSEKHFRLEHRLMAGLLIMSLSMMPVGMVSGLQQLFTLICLFYIGSIIAEPARETLSASLADARARGSYMGFSRLGLAIGGAIGYIGGGWLFDLGKSAHQPELPWMMLGIIGIFTFLALGWQFSQKRAARRLLERDA</sequence>
<dbReference type="EMBL" id="CP000247">
    <property type="protein sequence ID" value="ABG69070.1"/>
    <property type="molecule type" value="Genomic_DNA"/>
</dbReference>
<dbReference type="RefSeq" id="WP_000092206.1">
    <property type="nucleotide sequence ID" value="NC_008253.1"/>
</dbReference>
<dbReference type="SMR" id="Q0TJ09"/>
<dbReference type="GeneID" id="75203652"/>
<dbReference type="KEGG" id="ecp:ECP_1057"/>
<dbReference type="HOGENOM" id="CLU_001265_60_2_6"/>
<dbReference type="Proteomes" id="UP000009182">
    <property type="component" value="Chromosome"/>
</dbReference>
<dbReference type="GO" id="GO:0005886">
    <property type="term" value="C:plasma membrane"/>
    <property type="evidence" value="ECO:0007669"/>
    <property type="project" value="UniProtKB-SubCell"/>
</dbReference>
<dbReference type="GO" id="GO:0022857">
    <property type="term" value="F:transmembrane transporter activity"/>
    <property type="evidence" value="ECO:0007669"/>
    <property type="project" value="UniProtKB-UniRule"/>
</dbReference>
<dbReference type="GO" id="GO:0046677">
    <property type="term" value="P:response to antibiotic"/>
    <property type="evidence" value="ECO:0007669"/>
    <property type="project" value="UniProtKB-KW"/>
</dbReference>
<dbReference type="CDD" id="cd17329">
    <property type="entry name" value="MFS_MdtH_MDR_like"/>
    <property type="match status" value="1"/>
</dbReference>
<dbReference type="FunFam" id="1.20.1250.20:FF:000039">
    <property type="entry name" value="Multidrug resistance protein MdtH"/>
    <property type="match status" value="1"/>
</dbReference>
<dbReference type="Gene3D" id="1.20.1250.20">
    <property type="entry name" value="MFS general substrate transporter like domains"/>
    <property type="match status" value="1"/>
</dbReference>
<dbReference type="HAMAP" id="MF_01529">
    <property type="entry name" value="MFS_MdtH"/>
    <property type="match status" value="1"/>
</dbReference>
<dbReference type="InterPro" id="IPR011701">
    <property type="entry name" value="MFS"/>
</dbReference>
<dbReference type="InterPro" id="IPR020846">
    <property type="entry name" value="MFS_dom"/>
</dbReference>
<dbReference type="InterPro" id="IPR036259">
    <property type="entry name" value="MFS_trans_sf"/>
</dbReference>
<dbReference type="InterPro" id="IPR050171">
    <property type="entry name" value="MFS_Transporters"/>
</dbReference>
<dbReference type="InterPro" id="IPR022855">
    <property type="entry name" value="Multidrug-R_MdtH"/>
</dbReference>
<dbReference type="NCBIfam" id="NF008650">
    <property type="entry name" value="PRK11646.1"/>
    <property type="match status" value="1"/>
</dbReference>
<dbReference type="PANTHER" id="PTHR23517:SF2">
    <property type="entry name" value="MULTIDRUG RESISTANCE PROTEIN MDTH"/>
    <property type="match status" value="1"/>
</dbReference>
<dbReference type="PANTHER" id="PTHR23517">
    <property type="entry name" value="RESISTANCE PROTEIN MDTM, PUTATIVE-RELATED-RELATED"/>
    <property type="match status" value="1"/>
</dbReference>
<dbReference type="Pfam" id="PF07690">
    <property type="entry name" value="MFS_1"/>
    <property type="match status" value="1"/>
</dbReference>
<dbReference type="SUPFAM" id="SSF103473">
    <property type="entry name" value="MFS general substrate transporter"/>
    <property type="match status" value="1"/>
</dbReference>
<dbReference type="PROSITE" id="PS50850">
    <property type="entry name" value="MFS"/>
    <property type="match status" value="1"/>
</dbReference>
<keyword id="KW-0046">Antibiotic resistance</keyword>
<keyword id="KW-0997">Cell inner membrane</keyword>
<keyword id="KW-1003">Cell membrane</keyword>
<keyword id="KW-0472">Membrane</keyword>
<keyword id="KW-0812">Transmembrane</keyword>
<keyword id="KW-1133">Transmembrane helix</keyword>
<keyword id="KW-0813">Transport</keyword>
<feature type="chain" id="PRO_0000280498" description="Multidrug resistance protein MdtH">
    <location>
        <begin position="1"/>
        <end position="402"/>
    </location>
</feature>
<feature type="topological domain" description="Cytoplasmic" evidence="1">
    <location>
        <begin position="1"/>
        <end position="12"/>
    </location>
</feature>
<feature type="transmembrane region" description="Helical" evidence="1">
    <location>
        <begin position="13"/>
        <end position="33"/>
    </location>
</feature>
<feature type="topological domain" description="Periplasmic" evidence="1">
    <location>
        <begin position="34"/>
        <end position="98"/>
    </location>
</feature>
<feature type="transmembrane region" description="Helical" evidence="1">
    <location>
        <begin position="99"/>
        <end position="116"/>
    </location>
</feature>
<feature type="topological domain" description="Cytoplasmic" evidence="1">
    <location>
        <begin position="117"/>
        <end position="138"/>
    </location>
</feature>
<feature type="transmembrane region" description="Helical" evidence="1">
    <location>
        <begin position="139"/>
        <end position="159"/>
    </location>
</feature>
<feature type="topological domain" description="Periplasmic" evidence="1">
    <location>
        <begin position="160"/>
        <end position="164"/>
    </location>
</feature>
<feature type="transmembrane region" description="Helical" evidence="1">
    <location>
        <begin position="165"/>
        <end position="185"/>
    </location>
</feature>
<feature type="topological domain" description="Cytoplasmic" evidence="1">
    <location>
        <begin position="186"/>
        <end position="213"/>
    </location>
</feature>
<feature type="transmembrane region" description="Helical" evidence="1">
    <location>
        <begin position="214"/>
        <end position="234"/>
    </location>
</feature>
<feature type="topological domain" description="Periplasmic" evidence="1">
    <location>
        <begin position="235"/>
        <end position="243"/>
    </location>
</feature>
<feature type="transmembrane region" description="Helical" evidence="1">
    <location>
        <begin position="244"/>
        <end position="264"/>
    </location>
</feature>
<feature type="topological domain" description="Cytoplasmic" evidence="1">
    <location>
        <begin position="265"/>
        <end position="276"/>
    </location>
</feature>
<feature type="transmembrane region" description="Helical" evidence="1">
    <location>
        <begin position="277"/>
        <end position="297"/>
    </location>
</feature>
<feature type="topological domain" description="Periplasmic" evidence="1">
    <location>
        <begin position="298"/>
        <end position="299"/>
    </location>
</feature>
<feature type="transmembrane region" description="Helical" evidence="1">
    <location>
        <begin position="300"/>
        <end position="320"/>
    </location>
</feature>
<feature type="topological domain" description="Cytoplasmic" evidence="1">
    <location>
        <begin position="321"/>
        <end position="339"/>
    </location>
</feature>
<feature type="transmembrane region" description="Helical" evidence="1">
    <location>
        <begin position="340"/>
        <end position="360"/>
    </location>
</feature>
<feature type="topological domain" description="Periplasmic" evidence="1">
    <location>
        <begin position="361"/>
        <end position="367"/>
    </location>
</feature>
<feature type="transmembrane region" description="Helical" evidence="1">
    <location>
        <begin position="368"/>
        <end position="388"/>
    </location>
</feature>
<feature type="topological domain" description="Cytoplasmic" evidence="1">
    <location>
        <begin position="389"/>
        <end position="402"/>
    </location>
</feature>
<reference key="1">
    <citation type="journal article" date="2006" name="Mol. Microbiol.">
        <title>Role of pathogenicity island-associated integrases in the genome plasticity of uropathogenic Escherichia coli strain 536.</title>
        <authorList>
            <person name="Hochhut B."/>
            <person name="Wilde C."/>
            <person name="Balling G."/>
            <person name="Middendorf B."/>
            <person name="Dobrindt U."/>
            <person name="Brzuszkiewicz E."/>
            <person name="Gottschalk G."/>
            <person name="Carniel E."/>
            <person name="Hacker J."/>
        </authorList>
    </citation>
    <scope>NUCLEOTIDE SEQUENCE [LARGE SCALE GENOMIC DNA]</scope>
    <source>
        <strain>536 / UPEC</strain>
    </source>
</reference>
<proteinExistence type="inferred from homology"/>
<comment type="function">
    <text evidence="1">Confers resistance to norfloxacin and enoxacin.</text>
</comment>
<comment type="subcellular location">
    <subcellularLocation>
        <location evidence="1">Cell inner membrane</location>
        <topology evidence="1">Multi-pass membrane protein</topology>
    </subcellularLocation>
</comment>
<comment type="similarity">
    <text evidence="1">Belongs to the major facilitator superfamily. DHA1 family. MdtH (TC 2.A.1.2.21) subfamily.</text>
</comment>
<gene>
    <name evidence="1" type="primary">mdtH</name>
    <name type="ordered locus">ECP_1057</name>
</gene>
<organism>
    <name type="scientific">Escherichia coli O6:K15:H31 (strain 536 / UPEC)</name>
    <dbReference type="NCBI Taxonomy" id="362663"/>
    <lineage>
        <taxon>Bacteria</taxon>
        <taxon>Pseudomonadati</taxon>
        <taxon>Pseudomonadota</taxon>
        <taxon>Gammaproteobacteria</taxon>
        <taxon>Enterobacterales</taxon>
        <taxon>Enterobacteriaceae</taxon>
        <taxon>Escherichia</taxon>
    </lineage>
</organism>